<gene>
    <name type="primary">ESC8</name>
    <name type="ordered locus">YOL017W</name>
</gene>
<proteinExistence type="evidence at protein level"/>
<feature type="chain" id="PRO_0000227694" description="Protein ESC8">
    <location>
        <begin position="1"/>
        <end position="714"/>
    </location>
</feature>
<feature type="region of interest" description="Disordered" evidence="1">
    <location>
        <begin position="598"/>
        <end position="674"/>
    </location>
</feature>
<feature type="region of interest" description="Disordered" evidence="1">
    <location>
        <begin position="694"/>
        <end position="714"/>
    </location>
</feature>
<feature type="compositionally biased region" description="Polar residues" evidence="1">
    <location>
        <begin position="610"/>
        <end position="624"/>
    </location>
</feature>
<feature type="compositionally biased region" description="Acidic residues" evidence="1">
    <location>
        <begin position="628"/>
        <end position="650"/>
    </location>
</feature>
<feature type="compositionally biased region" description="Basic and acidic residues" evidence="1">
    <location>
        <begin position="654"/>
        <end position="674"/>
    </location>
</feature>
<feature type="compositionally biased region" description="Basic residues" evidence="1">
    <location>
        <begin position="704"/>
        <end position="714"/>
    </location>
</feature>
<keyword id="KW-0963">Cytoplasm</keyword>
<keyword id="KW-0539">Nucleus</keyword>
<keyword id="KW-1185">Reference proteome</keyword>
<keyword id="KW-0678">Repressor</keyword>
<keyword id="KW-0804">Transcription</keyword>
<keyword id="KW-0805">Transcription regulation</keyword>
<evidence type="ECO:0000256" key="1">
    <source>
        <dbReference type="SAM" id="MobiDB-lite"/>
    </source>
</evidence>
<evidence type="ECO:0000269" key="2">
    <source>
    </source>
</evidence>
<evidence type="ECO:0000269" key="3">
    <source>
    </source>
</evidence>
<evidence type="ECO:0000269" key="4">
    <source>
    </source>
</evidence>
<sequence>MTEIIDLDLVDDFIKKPMVKQQKNQSSKPRVKRRGQLTFDDFRNIKIVEEPVVLSHNSSIDESLDAATQNTKKREKYEGTCDEEMKTKEMEANMASKYSNIKTHSNDTNKVESISEHTTSNNRPLNTLNWSPNIPLRYSDFAKFMSDETVTESNWAPPLCTPLPYAGDVMKILSFIVKFKWVFSDDLLNLSFQDVEIGLELKVAGHSAKNIRICQDKMNLLFCSLLRLLFCSEKRADNQTHRNFTLKRFLSLKNPYGKLVGKLRSLIQEWGLPKEWRGNSDILSTLNFNGGGLLTMEPLDRIILLRCMIDWNCSYSALFHNEIQRLTHLKGDTGFNHQTFHASRFAMCGANNILDSCEVLCSLMSQKLENRKKRKPSDKGKLSKINSQMKFLKGVRKSLSEKVTTDRLRAAVKINEEWGEYFANEFTHTPIDDPTVDEIYKLRTSEFMIARIPRVGDFYLPPFWIGNECSSVNTSYSFNDMSTYLNYFVKFKEEGTKILPAKTAQNENKCQLKLIYRNTPACIRNLQFNDVHFAEVPHWFEVAGDSNSLSNFIEYLESLSSLTENDTDDTKKGIDNLIEFLKIFSIFINETIQRITAAPTGSTEGRHLRTSSQRRTTVHYSSDVNGDVSEESENEVDIDVSDDYDSEYLSEENTLTRKGEDRTDKSFGKRELHNGAKDCDRNCDDIEIFSEPVRQLQDNSREKRSLRRNARKGL</sequence>
<protein>
    <recommendedName>
        <fullName>Protein ESC8</fullName>
    </recommendedName>
    <alternativeName>
        <fullName>Establishes silent chromatin protein 8</fullName>
    </alternativeName>
</protein>
<dbReference type="EMBL" id="Z74759">
    <property type="protein sequence ID" value="CAA99016.1"/>
    <property type="molecule type" value="Genomic_DNA"/>
</dbReference>
<dbReference type="EMBL" id="BK006948">
    <property type="protein sequence ID" value="DAA10765.1"/>
    <property type="molecule type" value="Genomic_DNA"/>
</dbReference>
<dbReference type="PIR" id="S66699">
    <property type="entry name" value="S66699"/>
</dbReference>
<dbReference type="RefSeq" id="NP_014625.1">
    <property type="nucleotide sequence ID" value="NM_001183271.1"/>
</dbReference>
<dbReference type="SMR" id="Q08119"/>
<dbReference type="BioGRID" id="34386">
    <property type="interactions" value="139"/>
</dbReference>
<dbReference type="DIP" id="DIP-6827N"/>
<dbReference type="FunCoup" id="Q08119">
    <property type="interactions" value="74"/>
</dbReference>
<dbReference type="IntAct" id="Q08119">
    <property type="interactions" value="3"/>
</dbReference>
<dbReference type="MINT" id="Q08119"/>
<dbReference type="STRING" id="4932.YOL017W"/>
<dbReference type="iPTMnet" id="Q08119"/>
<dbReference type="PaxDb" id="4932-YOL017W"/>
<dbReference type="PeptideAtlas" id="Q08119"/>
<dbReference type="EnsemblFungi" id="YOL017W_mRNA">
    <property type="protein sequence ID" value="YOL017W"/>
    <property type="gene ID" value="YOL017W"/>
</dbReference>
<dbReference type="GeneID" id="854143"/>
<dbReference type="KEGG" id="sce:YOL017W"/>
<dbReference type="AGR" id="SGD:S000005377"/>
<dbReference type="SGD" id="S000005377">
    <property type="gene designation" value="ESC8"/>
</dbReference>
<dbReference type="VEuPathDB" id="FungiDB:YOL017W"/>
<dbReference type="eggNOG" id="ENOG502QVSC">
    <property type="taxonomic scope" value="Eukaryota"/>
</dbReference>
<dbReference type="GeneTree" id="ENSGT00940000176416"/>
<dbReference type="HOGENOM" id="CLU_471895_0_0_1"/>
<dbReference type="InParanoid" id="Q08119"/>
<dbReference type="OMA" id="WGLPKEW"/>
<dbReference type="OrthoDB" id="349045at2759"/>
<dbReference type="BioCyc" id="YEAST:G3O-33433-MONOMER"/>
<dbReference type="BioGRID-ORCS" id="854143">
    <property type="hits" value="1 hit in 10 CRISPR screens"/>
</dbReference>
<dbReference type="PRO" id="PR:Q08119"/>
<dbReference type="Proteomes" id="UP000002311">
    <property type="component" value="Chromosome XV"/>
</dbReference>
<dbReference type="RNAct" id="Q08119">
    <property type="molecule type" value="protein"/>
</dbReference>
<dbReference type="GO" id="GO:0005737">
    <property type="term" value="C:cytoplasm"/>
    <property type="evidence" value="ECO:0007669"/>
    <property type="project" value="UniProtKB-SubCell"/>
</dbReference>
<dbReference type="GO" id="GO:0005634">
    <property type="term" value="C:nucleus"/>
    <property type="evidence" value="ECO:0000353"/>
    <property type="project" value="SGD"/>
</dbReference>
<dbReference type="GO" id="GO:0031507">
    <property type="term" value="P:heterochromatin formation"/>
    <property type="evidence" value="ECO:0000315"/>
    <property type="project" value="SGD"/>
</dbReference>
<dbReference type="GO" id="GO:0007062">
    <property type="term" value="P:sister chromatid cohesion"/>
    <property type="evidence" value="ECO:0000315"/>
    <property type="project" value="SGD"/>
</dbReference>
<name>ESC8_YEAST</name>
<reference key="1">
    <citation type="journal article" date="1997" name="Nature">
        <title>The nucleotide sequence of Saccharomyces cerevisiae chromosome XV.</title>
        <authorList>
            <person name="Dujon B."/>
            <person name="Albermann K."/>
            <person name="Aldea M."/>
            <person name="Alexandraki D."/>
            <person name="Ansorge W."/>
            <person name="Arino J."/>
            <person name="Benes V."/>
            <person name="Bohn C."/>
            <person name="Bolotin-Fukuhara M."/>
            <person name="Bordonne R."/>
            <person name="Boyer J."/>
            <person name="Camasses A."/>
            <person name="Casamayor A."/>
            <person name="Casas C."/>
            <person name="Cheret G."/>
            <person name="Cziepluch C."/>
            <person name="Daignan-Fornier B."/>
            <person name="Dang V.-D."/>
            <person name="de Haan M."/>
            <person name="Delius H."/>
            <person name="Durand P."/>
            <person name="Fairhead C."/>
            <person name="Feldmann H."/>
            <person name="Gaillon L."/>
            <person name="Galisson F."/>
            <person name="Gamo F.-J."/>
            <person name="Gancedo C."/>
            <person name="Goffeau A."/>
            <person name="Goulding S.E."/>
            <person name="Grivell L.A."/>
            <person name="Habbig B."/>
            <person name="Hand N.J."/>
            <person name="Hani J."/>
            <person name="Hattenhorst U."/>
            <person name="Hebling U."/>
            <person name="Hernando Y."/>
            <person name="Herrero E."/>
            <person name="Heumann K."/>
            <person name="Hiesel R."/>
            <person name="Hilger F."/>
            <person name="Hofmann B."/>
            <person name="Hollenberg C.P."/>
            <person name="Hughes B."/>
            <person name="Jauniaux J.-C."/>
            <person name="Kalogeropoulos A."/>
            <person name="Katsoulou C."/>
            <person name="Kordes E."/>
            <person name="Lafuente M.J."/>
            <person name="Landt O."/>
            <person name="Louis E.J."/>
            <person name="Maarse A.C."/>
            <person name="Madania A."/>
            <person name="Mannhaupt G."/>
            <person name="Marck C."/>
            <person name="Martin R.P."/>
            <person name="Mewes H.-W."/>
            <person name="Michaux G."/>
            <person name="Paces V."/>
            <person name="Parle-McDermott A.G."/>
            <person name="Pearson B.M."/>
            <person name="Perrin A."/>
            <person name="Pettersson B."/>
            <person name="Poch O."/>
            <person name="Pohl T.M."/>
            <person name="Poirey R."/>
            <person name="Portetelle D."/>
            <person name="Pujol A."/>
            <person name="Purnelle B."/>
            <person name="Ramezani Rad M."/>
            <person name="Rechmann S."/>
            <person name="Schwager C."/>
            <person name="Schweizer M."/>
            <person name="Sor F."/>
            <person name="Sterky F."/>
            <person name="Tarassov I.A."/>
            <person name="Teodoru C."/>
            <person name="Tettelin H."/>
            <person name="Thierry A."/>
            <person name="Tobiasch E."/>
            <person name="Tzermia M."/>
            <person name="Uhlen M."/>
            <person name="Unseld M."/>
            <person name="Valens M."/>
            <person name="Vandenbol M."/>
            <person name="Vetter I."/>
            <person name="Vlcek C."/>
            <person name="Voet M."/>
            <person name="Volckaert G."/>
            <person name="Voss H."/>
            <person name="Wambutt R."/>
            <person name="Wedler H."/>
            <person name="Wiemann S."/>
            <person name="Winsor B."/>
            <person name="Wolfe K.H."/>
            <person name="Zollner A."/>
            <person name="Zumstein E."/>
            <person name="Kleine K."/>
        </authorList>
    </citation>
    <scope>NUCLEOTIDE SEQUENCE [LARGE SCALE GENOMIC DNA]</scope>
    <source>
        <strain>ATCC 204508 / S288c</strain>
    </source>
</reference>
<reference key="2">
    <citation type="journal article" date="2014" name="G3 (Bethesda)">
        <title>The reference genome sequence of Saccharomyces cerevisiae: Then and now.</title>
        <authorList>
            <person name="Engel S.R."/>
            <person name="Dietrich F.S."/>
            <person name="Fisk D.G."/>
            <person name="Binkley G."/>
            <person name="Balakrishnan R."/>
            <person name="Costanzo M.C."/>
            <person name="Dwight S.S."/>
            <person name="Hitz B.C."/>
            <person name="Karra K."/>
            <person name="Nash R.S."/>
            <person name="Weng S."/>
            <person name="Wong E.D."/>
            <person name="Lloyd P."/>
            <person name="Skrzypek M.S."/>
            <person name="Miyasato S.R."/>
            <person name="Simison M."/>
            <person name="Cherry J.M."/>
        </authorList>
    </citation>
    <scope>GENOME REANNOTATION</scope>
    <source>
        <strain>ATCC 204508 / S288c</strain>
    </source>
</reference>
<reference key="3">
    <citation type="journal article" date="2002" name="Genetics">
        <title>Restoration of silencing in Saccharomyces cerevisiae by tethering of a novel Sir2-interacting protein, Esc8.</title>
        <authorList>
            <person name="Cuperus G."/>
            <person name="Shore D."/>
        </authorList>
    </citation>
    <scope>FUNCTION</scope>
    <scope>INTERACTION WITH SIR2 AND GAL11</scope>
</reference>
<reference key="4">
    <citation type="journal article" date="2003" name="Nature">
        <title>Global analysis of protein localization in budding yeast.</title>
        <authorList>
            <person name="Huh W.-K."/>
            <person name="Falvo J.V."/>
            <person name="Gerke L.C."/>
            <person name="Carroll A.S."/>
            <person name="Howson R.W."/>
            <person name="Weissman J.S."/>
            <person name="O'Shea E.K."/>
        </authorList>
    </citation>
    <scope>SUBCELLULAR LOCATION [LARGE SCALE ANALYSIS]</scope>
</reference>
<reference key="5">
    <citation type="journal article" date="2003" name="Nature">
        <title>Global analysis of protein expression in yeast.</title>
        <authorList>
            <person name="Ghaemmaghami S."/>
            <person name="Huh W.-K."/>
            <person name="Bower K."/>
            <person name="Howson R.W."/>
            <person name="Belle A."/>
            <person name="Dephoure N."/>
            <person name="O'Shea E.K."/>
            <person name="Weissman J.S."/>
        </authorList>
    </citation>
    <scope>LEVEL OF PROTEIN EXPRESSION [LARGE SCALE ANALYSIS]</scope>
</reference>
<organism>
    <name type="scientific">Saccharomyces cerevisiae (strain ATCC 204508 / S288c)</name>
    <name type="common">Baker's yeast</name>
    <dbReference type="NCBI Taxonomy" id="559292"/>
    <lineage>
        <taxon>Eukaryota</taxon>
        <taxon>Fungi</taxon>
        <taxon>Dikarya</taxon>
        <taxon>Ascomycota</taxon>
        <taxon>Saccharomycotina</taxon>
        <taxon>Saccharomycetes</taxon>
        <taxon>Saccharomycetales</taxon>
        <taxon>Saccharomycetaceae</taxon>
        <taxon>Saccharomyces</taxon>
    </lineage>
</organism>
<comment type="function">
    <text evidence="2">Involved in HMR and telomere silencing via the recruitment or stabilizing of the SIR (silent information regulators) complex.</text>
</comment>
<comment type="subunit">
    <text evidence="2">Interacts with GAL11 and SIR2.</text>
</comment>
<comment type="subcellular location">
    <subcellularLocation>
        <location evidence="3">Cytoplasm</location>
    </subcellularLocation>
    <subcellularLocation>
        <location evidence="3">Nucleus</location>
    </subcellularLocation>
</comment>
<comment type="miscellaneous">
    <text evidence="4">Present with 432 molecules/cell in log phase SD medium.</text>
</comment>
<accession>Q08119</accession>
<accession>D6W249</accession>